<sequence length="310" mass="34893">MIIVTGGAGFIGSNIVKALNDKGITDILVVDNLKDGTKFVNLVDLNIADYMDKEDFLIQIMAGEEFGDVEAIFHEGACSSTTEWDGKYMMDNNYQYSKELLHYCLEREIPFLYASSAATYGGRTSDFIESREYEKPLNVYGYSKFLFDEYVRQILPEANSQIVGFRYFNVYGPREGHKGSMASVAFHLNTQLNNGESPKLFEGSENFKRDFVYVGDVADVNLWFLENGVSGIFNLGTGRAESFQAVADATLAYHKKGQIEYIPFPDKLKGRYQAFTQADLTNLRAAGYDKPFKTVAEGVTEYMAWLNRDA</sequence>
<reference key="1">
    <citation type="journal article" date="2011" name="Proc. Natl. Acad. Sci. U.S.A.">
        <title>Genomic anatomy of Escherichia coli O157:H7 outbreaks.</title>
        <authorList>
            <person name="Eppinger M."/>
            <person name="Mammel M.K."/>
            <person name="Leclerc J.E."/>
            <person name="Ravel J."/>
            <person name="Cebula T.A."/>
        </authorList>
    </citation>
    <scope>NUCLEOTIDE SEQUENCE [LARGE SCALE GENOMIC DNA]</scope>
    <source>
        <strain>EC4115 / EHEC</strain>
    </source>
</reference>
<organism>
    <name type="scientific">Escherichia coli O157:H7 (strain EC4115 / EHEC)</name>
    <dbReference type="NCBI Taxonomy" id="444450"/>
    <lineage>
        <taxon>Bacteria</taxon>
        <taxon>Pseudomonadati</taxon>
        <taxon>Pseudomonadota</taxon>
        <taxon>Gammaproteobacteria</taxon>
        <taxon>Enterobacterales</taxon>
        <taxon>Enterobacteriaceae</taxon>
        <taxon>Escherichia</taxon>
    </lineage>
</organism>
<name>HLDD_ECO5E</name>
<keyword id="KW-0007">Acetylation</keyword>
<keyword id="KW-0119">Carbohydrate metabolism</keyword>
<keyword id="KW-0413">Isomerase</keyword>
<keyword id="KW-0521">NADP</keyword>
<protein>
    <recommendedName>
        <fullName evidence="1">ADP-L-glycero-D-manno-heptose-6-epimerase</fullName>
        <ecNumber evidence="1">5.1.3.20</ecNumber>
    </recommendedName>
    <alternativeName>
        <fullName evidence="1">ADP-L-glycero-beta-D-manno-heptose-6-epimerase</fullName>
        <shortName evidence="1">ADP-glyceromanno-heptose 6-epimerase</shortName>
        <shortName evidence="1">ADP-hep 6-epimerase</shortName>
        <shortName evidence="1">AGME</shortName>
    </alternativeName>
</protein>
<proteinExistence type="inferred from homology"/>
<dbReference type="EC" id="5.1.3.20" evidence="1"/>
<dbReference type="EMBL" id="CP001164">
    <property type="protein sequence ID" value="ACI39365.1"/>
    <property type="molecule type" value="Genomic_DNA"/>
</dbReference>
<dbReference type="SMR" id="B5YWC0"/>
<dbReference type="KEGG" id="ecf:ECH74115_4992"/>
<dbReference type="HOGENOM" id="CLU_007383_1_3_6"/>
<dbReference type="UniPathway" id="UPA00356">
    <property type="reaction ID" value="UER00440"/>
</dbReference>
<dbReference type="GO" id="GO:0008712">
    <property type="term" value="F:ADP-glyceromanno-heptose 6-epimerase activity"/>
    <property type="evidence" value="ECO:0007669"/>
    <property type="project" value="UniProtKB-UniRule"/>
</dbReference>
<dbReference type="GO" id="GO:0050661">
    <property type="term" value="F:NADP binding"/>
    <property type="evidence" value="ECO:0007669"/>
    <property type="project" value="InterPro"/>
</dbReference>
<dbReference type="GO" id="GO:0097171">
    <property type="term" value="P:ADP-L-glycero-beta-D-manno-heptose biosynthetic process"/>
    <property type="evidence" value="ECO:0007669"/>
    <property type="project" value="UniProtKB-UniPathway"/>
</dbReference>
<dbReference type="GO" id="GO:0005975">
    <property type="term" value="P:carbohydrate metabolic process"/>
    <property type="evidence" value="ECO:0007669"/>
    <property type="project" value="UniProtKB-UniRule"/>
</dbReference>
<dbReference type="CDD" id="cd05248">
    <property type="entry name" value="ADP_GME_SDR_e"/>
    <property type="match status" value="1"/>
</dbReference>
<dbReference type="Gene3D" id="3.40.50.720">
    <property type="entry name" value="NAD(P)-binding Rossmann-like Domain"/>
    <property type="match status" value="1"/>
</dbReference>
<dbReference type="Gene3D" id="3.90.25.10">
    <property type="entry name" value="UDP-galactose 4-epimerase, domain 1"/>
    <property type="match status" value="1"/>
</dbReference>
<dbReference type="HAMAP" id="MF_01601">
    <property type="entry name" value="Heptose_epimerase"/>
    <property type="match status" value="1"/>
</dbReference>
<dbReference type="InterPro" id="IPR001509">
    <property type="entry name" value="Epimerase_deHydtase"/>
</dbReference>
<dbReference type="InterPro" id="IPR011912">
    <property type="entry name" value="Heptose_epim"/>
</dbReference>
<dbReference type="InterPro" id="IPR036291">
    <property type="entry name" value="NAD(P)-bd_dom_sf"/>
</dbReference>
<dbReference type="NCBIfam" id="TIGR02197">
    <property type="entry name" value="heptose_epim"/>
    <property type="match status" value="1"/>
</dbReference>
<dbReference type="NCBIfam" id="NF008360">
    <property type="entry name" value="PRK11150.1"/>
    <property type="match status" value="1"/>
</dbReference>
<dbReference type="PANTHER" id="PTHR43103:SF3">
    <property type="entry name" value="ADP-L-GLYCERO-D-MANNO-HEPTOSE-6-EPIMERASE"/>
    <property type="match status" value="1"/>
</dbReference>
<dbReference type="PANTHER" id="PTHR43103">
    <property type="entry name" value="NUCLEOSIDE-DIPHOSPHATE-SUGAR EPIMERASE"/>
    <property type="match status" value="1"/>
</dbReference>
<dbReference type="Pfam" id="PF01370">
    <property type="entry name" value="Epimerase"/>
    <property type="match status" value="1"/>
</dbReference>
<dbReference type="SUPFAM" id="SSF51735">
    <property type="entry name" value="NAD(P)-binding Rossmann-fold domains"/>
    <property type="match status" value="1"/>
</dbReference>
<feature type="chain" id="PRO_1000190403" description="ADP-L-glycero-D-manno-heptose-6-epimerase">
    <location>
        <begin position="1"/>
        <end position="310"/>
    </location>
</feature>
<feature type="active site" description="Proton acceptor" evidence="1">
    <location>
        <position position="140"/>
    </location>
</feature>
<feature type="active site" description="Proton acceptor" evidence="1">
    <location>
        <position position="178"/>
    </location>
</feature>
<feature type="binding site" evidence="1">
    <location>
        <begin position="10"/>
        <end position="11"/>
    </location>
    <ligand>
        <name>NADP(+)</name>
        <dbReference type="ChEBI" id="CHEBI:58349"/>
    </ligand>
</feature>
<feature type="binding site" evidence="1">
    <location>
        <begin position="31"/>
        <end position="32"/>
    </location>
    <ligand>
        <name>NADP(+)</name>
        <dbReference type="ChEBI" id="CHEBI:58349"/>
    </ligand>
</feature>
<feature type="binding site" evidence="1">
    <location>
        <position position="38"/>
    </location>
    <ligand>
        <name>NADP(+)</name>
        <dbReference type="ChEBI" id="CHEBI:58349"/>
    </ligand>
</feature>
<feature type="binding site" evidence="1">
    <location>
        <position position="53"/>
    </location>
    <ligand>
        <name>NADP(+)</name>
        <dbReference type="ChEBI" id="CHEBI:58349"/>
    </ligand>
</feature>
<feature type="binding site" evidence="1">
    <location>
        <begin position="75"/>
        <end position="79"/>
    </location>
    <ligand>
        <name>NADP(+)</name>
        <dbReference type="ChEBI" id="CHEBI:58349"/>
    </ligand>
</feature>
<feature type="binding site" evidence="1">
    <location>
        <position position="92"/>
    </location>
    <ligand>
        <name>NADP(+)</name>
        <dbReference type="ChEBI" id="CHEBI:58349"/>
    </ligand>
</feature>
<feature type="binding site" evidence="1">
    <location>
        <position position="144"/>
    </location>
    <ligand>
        <name>NADP(+)</name>
        <dbReference type="ChEBI" id="CHEBI:58349"/>
    </ligand>
</feature>
<feature type="binding site" evidence="1">
    <location>
        <position position="169"/>
    </location>
    <ligand>
        <name>substrate</name>
    </ligand>
</feature>
<feature type="binding site" evidence="1">
    <location>
        <position position="170"/>
    </location>
    <ligand>
        <name>NADP(+)</name>
        <dbReference type="ChEBI" id="CHEBI:58349"/>
    </ligand>
</feature>
<feature type="binding site" evidence="1">
    <location>
        <position position="178"/>
    </location>
    <ligand>
        <name>NADP(+)</name>
        <dbReference type="ChEBI" id="CHEBI:58349"/>
    </ligand>
</feature>
<feature type="binding site" evidence="1">
    <location>
        <position position="180"/>
    </location>
    <ligand>
        <name>substrate</name>
    </ligand>
</feature>
<feature type="binding site" evidence="1">
    <location>
        <position position="187"/>
    </location>
    <ligand>
        <name>substrate</name>
    </ligand>
</feature>
<feature type="binding site" evidence="1">
    <location>
        <begin position="201"/>
        <end position="204"/>
    </location>
    <ligand>
        <name>substrate</name>
    </ligand>
</feature>
<feature type="binding site" evidence="1">
    <location>
        <position position="209"/>
    </location>
    <ligand>
        <name>substrate</name>
    </ligand>
</feature>
<feature type="binding site" evidence="1">
    <location>
        <position position="272"/>
    </location>
    <ligand>
        <name>substrate</name>
    </ligand>
</feature>
<feature type="modified residue" description="N6-acetyllysine" evidence="1">
    <location>
        <position position="267"/>
    </location>
</feature>
<evidence type="ECO:0000255" key="1">
    <source>
        <dbReference type="HAMAP-Rule" id="MF_01601"/>
    </source>
</evidence>
<comment type="function">
    <text evidence="1">Catalyzes the interconversion between ADP-D-glycero-beta-D-manno-heptose and ADP-L-glycero-beta-D-manno-heptose via an epimerization at carbon 6 of the heptose.</text>
</comment>
<comment type="catalytic activity">
    <reaction evidence="1">
        <text>ADP-D-glycero-beta-D-manno-heptose = ADP-L-glycero-beta-D-manno-heptose</text>
        <dbReference type="Rhea" id="RHEA:17577"/>
        <dbReference type="ChEBI" id="CHEBI:59967"/>
        <dbReference type="ChEBI" id="CHEBI:61506"/>
        <dbReference type="EC" id="5.1.3.20"/>
    </reaction>
</comment>
<comment type="cofactor">
    <cofactor evidence="1">
        <name>NADP(+)</name>
        <dbReference type="ChEBI" id="CHEBI:58349"/>
    </cofactor>
    <text evidence="1">Binds 1 NADP(+) per subunit.</text>
</comment>
<comment type="pathway">
    <text evidence="1">Nucleotide-sugar biosynthesis; ADP-L-glycero-beta-D-manno-heptose biosynthesis; ADP-L-glycero-beta-D-manno-heptose from D-glycero-beta-D-manno-heptose 7-phosphate: step 4/4.</text>
</comment>
<comment type="subunit">
    <text evidence="1">Homopentamer.</text>
</comment>
<comment type="domain">
    <text evidence="1">Contains a large N-terminal NADP-binding domain, and a smaller C-terminal substrate-binding domain.</text>
</comment>
<comment type="similarity">
    <text evidence="1">Belongs to the NAD(P)-dependent epimerase/dehydratase family. HldD subfamily.</text>
</comment>
<accession>B5YWC0</accession>
<gene>
    <name evidence="1" type="primary">hldD</name>
    <name type="ordered locus">ECH74115_4992</name>
</gene>